<keyword id="KW-1185">Reference proteome</keyword>
<keyword id="KW-0687">Ribonucleoprotein</keyword>
<keyword id="KW-0689">Ribosomal protein</keyword>
<keyword id="KW-0694">RNA-binding</keyword>
<keyword id="KW-0699">rRNA-binding</keyword>
<name>RS11_BDEBA</name>
<gene>
    <name evidence="1" type="primary">rpsK</name>
    <name type="ordered locus">Bd2952</name>
</gene>
<organism>
    <name type="scientific">Bdellovibrio bacteriovorus (strain ATCC 15356 / DSM 50701 / NCIMB 9529 / HD100)</name>
    <dbReference type="NCBI Taxonomy" id="264462"/>
    <lineage>
        <taxon>Bacteria</taxon>
        <taxon>Pseudomonadati</taxon>
        <taxon>Bdellovibrionota</taxon>
        <taxon>Bdellovibrionia</taxon>
        <taxon>Bdellovibrionales</taxon>
        <taxon>Pseudobdellovibrionaceae</taxon>
        <taxon>Bdellovibrio</taxon>
    </lineage>
</organism>
<accession>Q6MJ34</accession>
<dbReference type="EMBL" id="BX842654">
    <property type="protein sequence ID" value="CAE80727.1"/>
    <property type="molecule type" value="Genomic_DNA"/>
</dbReference>
<dbReference type="RefSeq" id="WP_011165330.1">
    <property type="nucleotide sequence ID" value="NC_005363.1"/>
</dbReference>
<dbReference type="SMR" id="Q6MJ34"/>
<dbReference type="STRING" id="264462.Bd2952"/>
<dbReference type="GeneID" id="93013817"/>
<dbReference type="KEGG" id="bba:Bd2952"/>
<dbReference type="eggNOG" id="COG0100">
    <property type="taxonomic scope" value="Bacteria"/>
</dbReference>
<dbReference type="HOGENOM" id="CLU_072439_5_0_7"/>
<dbReference type="Proteomes" id="UP000008080">
    <property type="component" value="Chromosome"/>
</dbReference>
<dbReference type="GO" id="GO:1990904">
    <property type="term" value="C:ribonucleoprotein complex"/>
    <property type="evidence" value="ECO:0007669"/>
    <property type="project" value="UniProtKB-KW"/>
</dbReference>
<dbReference type="GO" id="GO:0005840">
    <property type="term" value="C:ribosome"/>
    <property type="evidence" value="ECO:0007669"/>
    <property type="project" value="UniProtKB-KW"/>
</dbReference>
<dbReference type="GO" id="GO:0019843">
    <property type="term" value="F:rRNA binding"/>
    <property type="evidence" value="ECO:0007669"/>
    <property type="project" value="UniProtKB-UniRule"/>
</dbReference>
<dbReference type="GO" id="GO:0003735">
    <property type="term" value="F:structural constituent of ribosome"/>
    <property type="evidence" value="ECO:0007669"/>
    <property type="project" value="InterPro"/>
</dbReference>
<dbReference type="GO" id="GO:0006412">
    <property type="term" value="P:translation"/>
    <property type="evidence" value="ECO:0007669"/>
    <property type="project" value="UniProtKB-UniRule"/>
</dbReference>
<dbReference type="FunFam" id="3.30.420.80:FF:000001">
    <property type="entry name" value="30S ribosomal protein S11"/>
    <property type="match status" value="1"/>
</dbReference>
<dbReference type="Gene3D" id="3.30.420.80">
    <property type="entry name" value="Ribosomal protein S11"/>
    <property type="match status" value="1"/>
</dbReference>
<dbReference type="HAMAP" id="MF_01310">
    <property type="entry name" value="Ribosomal_uS11"/>
    <property type="match status" value="1"/>
</dbReference>
<dbReference type="InterPro" id="IPR001971">
    <property type="entry name" value="Ribosomal_uS11"/>
</dbReference>
<dbReference type="InterPro" id="IPR019981">
    <property type="entry name" value="Ribosomal_uS11_bac-type"/>
</dbReference>
<dbReference type="InterPro" id="IPR018102">
    <property type="entry name" value="Ribosomal_uS11_CS"/>
</dbReference>
<dbReference type="InterPro" id="IPR036967">
    <property type="entry name" value="Ribosomal_uS11_sf"/>
</dbReference>
<dbReference type="NCBIfam" id="NF003698">
    <property type="entry name" value="PRK05309.1"/>
    <property type="match status" value="1"/>
</dbReference>
<dbReference type="NCBIfam" id="TIGR03632">
    <property type="entry name" value="uS11_bact"/>
    <property type="match status" value="1"/>
</dbReference>
<dbReference type="PANTHER" id="PTHR11759">
    <property type="entry name" value="40S RIBOSOMAL PROTEIN S14/30S RIBOSOMAL PROTEIN S11"/>
    <property type="match status" value="1"/>
</dbReference>
<dbReference type="Pfam" id="PF00411">
    <property type="entry name" value="Ribosomal_S11"/>
    <property type="match status" value="1"/>
</dbReference>
<dbReference type="PIRSF" id="PIRSF002131">
    <property type="entry name" value="Ribosomal_S11"/>
    <property type="match status" value="1"/>
</dbReference>
<dbReference type="SUPFAM" id="SSF53137">
    <property type="entry name" value="Translational machinery components"/>
    <property type="match status" value="1"/>
</dbReference>
<dbReference type="PROSITE" id="PS00054">
    <property type="entry name" value="RIBOSOMAL_S11"/>
    <property type="match status" value="1"/>
</dbReference>
<protein>
    <recommendedName>
        <fullName evidence="1">Small ribosomal subunit protein uS11</fullName>
    </recommendedName>
    <alternativeName>
        <fullName evidence="2">30S ribosomal protein S11</fullName>
    </alternativeName>
</protein>
<sequence>MNTDKKAVTKKKVKRNVPQGNCYIQAGFGNVIVTMTDPTGATVSWSSAGHLGFKGSRKGTPFAAQVAAEDAAKKAMEAGMKSVDVYLKGPGAGREPAIRALAATGMRILSLKDVTPVPHNGCRPPKRRRI</sequence>
<proteinExistence type="inferred from homology"/>
<feature type="chain" id="PRO_0000123110" description="Small ribosomal subunit protein uS11">
    <location>
        <begin position="1"/>
        <end position="130"/>
    </location>
</feature>
<evidence type="ECO:0000255" key="1">
    <source>
        <dbReference type="HAMAP-Rule" id="MF_01310"/>
    </source>
</evidence>
<evidence type="ECO:0000305" key="2"/>
<reference key="1">
    <citation type="journal article" date="2004" name="Science">
        <title>A predator unmasked: life cycle of Bdellovibrio bacteriovorus from a genomic perspective.</title>
        <authorList>
            <person name="Rendulic S."/>
            <person name="Jagtap P."/>
            <person name="Rosinus A."/>
            <person name="Eppinger M."/>
            <person name="Baar C."/>
            <person name="Lanz C."/>
            <person name="Keller H."/>
            <person name="Lambert C."/>
            <person name="Evans K.J."/>
            <person name="Goesmann A."/>
            <person name="Meyer F."/>
            <person name="Sockett R.E."/>
            <person name="Schuster S.C."/>
        </authorList>
    </citation>
    <scope>NUCLEOTIDE SEQUENCE [LARGE SCALE GENOMIC DNA]</scope>
    <source>
        <strain>ATCC 15356 / DSM 50701 / NCIMB 9529 / HD100</strain>
    </source>
</reference>
<comment type="function">
    <text evidence="1">Located on the platform of the 30S subunit, it bridges several disparate RNA helices of the 16S rRNA. Forms part of the Shine-Dalgarno cleft in the 70S ribosome.</text>
</comment>
<comment type="subunit">
    <text evidence="1">Part of the 30S ribosomal subunit. Interacts with proteins S7 and S18. Binds to IF-3.</text>
</comment>
<comment type="similarity">
    <text evidence="1">Belongs to the universal ribosomal protein uS11 family.</text>
</comment>